<comment type="catalytic activity">
    <reaction evidence="1">
        <text>urea + 2 H2O + H(+) = hydrogencarbonate + 2 NH4(+)</text>
        <dbReference type="Rhea" id="RHEA:20557"/>
        <dbReference type="ChEBI" id="CHEBI:15377"/>
        <dbReference type="ChEBI" id="CHEBI:15378"/>
        <dbReference type="ChEBI" id="CHEBI:16199"/>
        <dbReference type="ChEBI" id="CHEBI:17544"/>
        <dbReference type="ChEBI" id="CHEBI:28938"/>
        <dbReference type="EC" id="3.5.1.5"/>
    </reaction>
</comment>
<comment type="pathway">
    <text evidence="1">Nitrogen metabolism; urea degradation; CO(2) and NH(3) from urea (urease route): step 1/1.</text>
</comment>
<comment type="subunit">
    <text evidence="1">Heterotrimer of UreA (gamma), UreB (beta) and UreC (alpha) subunits. Three heterotrimers associate to form the active enzyme.</text>
</comment>
<comment type="subcellular location">
    <subcellularLocation>
        <location evidence="1">Cytoplasm</location>
    </subcellularLocation>
</comment>
<comment type="similarity">
    <text evidence="1">Belongs to the urease gamma subunit family.</text>
</comment>
<organism>
    <name type="scientific">Sinorhizobium medicae (strain WSM419)</name>
    <name type="common">Ensifer medicae</name>
    <dbReference type="NCBI Taxonomy" id="366394"/>
    <lineage>
        <taxon>Bacteria</taxon>
        <taxon>Pseudomonadati</taxon>
        <taxon>Pseudomonadota</taxon>
        <taxon>Alphaproteobacteria</taxon>
        <taxon>Hyphomicrobiales</taxon>
        <taxon>Rhizobiaceae</taxon>
        <taxon>Sinorhizobium/Ensifer group</taxon>
        <taxon>Sinorhizobium</taxon>
    </lineage>
</organism>
<gene>
    <name evidence="1" type="primary">ureA</name>
    <name type="ordered locus">Smed_2388</name>
</gene>
<evidence type="ECO:0000255" key="1">
    <source>
        <dbReference type="HAMAP-Rule" id="MF_00739"/>
    </source>
</evidence>
<keyword id="KW-0963">Cytoplasm</keyword>
<keyword id="KW-0378">Hydrolase</keyword>
<reference key="1">
    <citation type="submission" date="2007-06" db="EMBL/GenBank/DDBJ databases">
        <title>Complete sequence of Sinorhizobium medicae WSM419 chromosome.</title>
        <authorList>
            <consortium name="US DOE Joint Genome Institute"/>
            <person name="Copeland A."/>
            <person name="Lucas S."/>
            <person name="Lapidus A."/>
            <person name="Barry K."/>
            <person name="Glavina del Rio T."/>
            <person name="Dalin E."/>
            <person name="Tice H."/>
            <person name="Pitluck S."/>
            <person name="Chain P."/>
            <person name="Malfatti S."/>
            <person name="Shin M."/>
            <person name="Vergez L."/>
            <person name="Schmutz J."/>
            <person name="Larimer F."/>
            <person name="Land M."/>
            <person name="Hauser L."/>
            <person name="Kyrpides N."/>
            <person name="Mikhailova N."/>
            <person name="Reeve W.G."/>
            <person name="Richardson P."/>
        </authorList>
    </citation>
    <scope>NUCLEOTIDE SEQUENCE [LARGE SCALE GENOMIC DNA]</scope>
    <source>
        <strain>WSM419</strain>
    </source>
</reference>
<sequence length="100" mass="11142">MNLTPREKDKLLISMAAMVARRRLERGVKLNHPEAIALITDFVVEGARDGRSVAELMEAGAHVLTRDQVMEGIAEMIHDIQIEATFPDGTKLVTVHEPIR</sequence>
<feature type="chain" id="PRO_1000046369" description="Urease subunit gamma">
    <location>
        <begin position="1"/>
        <end position="100"/>
    </location>
</feature>
<proteinExistence type="inferred from homology"/>
<name>URE3_SINMW</name>
<accession>A6UC40</accession>
<dbReference type="EC" id="3.5.1.5" evidence="1"/>
<dbReference type="EMBL" id="CP000738">
    <property type="protein sequence ID" value="ABR61220.1"/>
    <property type="molecule type" value="Genomic_DNA"/>
</dbReference>
<dbReference type="RefSeq" id="WP_012066611.1">
    <property type="nucleotide sequence ID" value="NC_009636.1"/>
</dbReference>
<dbReference type="RefSeq" id="YP_001328055.1">
    <property type="nucleotide sequence ID" value="NC_009636.1"/>
</dbReference>
<dbReference type="SMR" id="A6UC40"/>
<dbReference type="STRING" id="366394.Smed_2388"/>
<dbReference type="KEGG" id="smd:Smed_2388"/>
<dbReference type="PATRIC" id="fig|366394.8.peg.5571"/>
<dbReference type="eggNOG" id="COG0831">
    <property type="taxonomic scope" value="Bacteria"/>
</dbReference>
<dbReference type="HOGENOM" id="CLU_145825_1_0_5"/>
<dbReference type="OrthoDB" id="9797217at2"/>
<dbReference type="UniPathway" id="UPA00258">
    <property type="reaction ID" value="UER00370"/>
</dbReference>
<dbReference type="Proteomes" id="UP000001108">
    <property type="component" value="Chromosome"/>
</dbReference>
<dbReference type="GO" id="GO:0005737">
    <property type="term" value="C:cytoplasm"/>
    <property type="evidence" value="ECO:0007669"/>
    <property type="project" value="UniProtKB-SubCell"/>
</dbReference>
<dbReference type="GO" id="GO:0016151">
    <property type="term" value="F:nickel cation binding"/>
    <property type="evidence" value="ECO:0007669"/>
    <property type="project" value="InterPro"/>
</dbReference>
<dbReference type="GO" id="GO:0009039">
    <property type="term" value="F:urease activity"/>
    <property type="evidence" value="ECO:0007669"/>
    <property type="project" value="UniProtKB-UniRule"/>
</dbReference>
<dbReference type="GO" id="GO:0043419">
    <property type="term" value="P:urea catabolic process"/>
    <property type="evidence" value="ECO:0007669"/>
    <property type="project" value="UniProtKB-UniRule"/>
</dbReference>
<dbReference type="CDD" id="cd00390">
    <property type="entry name" value="Urease_gamma"/>
    <property type="match status" value="1"/>
</dbReference>
<dbReference type="Gene3D" id="3.30.280.10">
    <property type="entry name" value="Urease, gamma-like subunit"/>
    <property type="match status" value="1"/>
</dbReference>
<dbReference type="HAMAP" id="MF_00739">
    <property type="entry name" value="Urease_gamma"/>
    <property type="match status" value="1"/>
</dbReference>
<dbReference type="InterPro" id="IPR012010">
    <property type="entry name" value="Urease_gamma"/>
</dbReference>
<dbReference type="InterPro" id="IPR002026">
    <property type="entry name" value="Urease_gamma/gamma-beta_su"/>
</dbReference>
<dbReference type="InterPro" id="IPR036463">
    <property type="entry name" value="Urease_gamma_sf"/>
</dbReference>
<dbReference type="InterPro" id="IPR050069">
    <property type="entry name" value="Urease_subunit"/>
</dbReference>
<dbReference type="NCBIfam" id="NF009712">
    <property type="entry name" value="PRK13241.1"/>
    <property type="match status" value="1"/>
</dbReference>
<dbReference type="NCBIfam" id="TIGR00193">
    <property type="entry name" value="urease_gam"/>
    <property type="match status" value="1"/>
</dbReference>
<dbReference type="PANTHER" id="PTHR33569">
    <property type="entry name" value="UREASE"/>
    <property type="match status" value="1"/>
</dbReference>
<dbReference type="PANTHER" id="PTHR33569:SF1">
    <property type="entry name" value="UREASE"/>
    <property type="match status" value="1"/>
</dbReference>
<dbReference type="Pfam" id="PF00547">
    <property type="entry name" value="Urease_gamma"/>
    <property type="match status" value="1"/>
</dbReference>
<dbReference type="PIRSF" id="PIRSF001223">
    <property type="entry name" value="Urease_gamma"/>
    <property type="match status" value="1"/>
</dbReference>
<dbReference type="SUPFAM" id="SSF54111">
    <property type="entry name" value="Urease, gamma-subunit"/>
    <property type="match status" value="1"/>
</dbReference>
<protein>
    <recommendedName>
        <fullName evidence="1">Urease subunit gamma</fullName>
        <ecNumber evidence="1">3.5.1.5</ecNumber>
    </recommendedName>
    <alternativeName>
        <fullName evidence="1">Urea amidohydrolase subunit gamma</fullName>
    </alternativeName>
</protein>